<accession>P0ABG1</accession>
<accession>P06466</accession>
<evidence type="ECO:0000255" key="1"/>
<evidence type="ECO:0000305" key="2"/>
<comment type="catalytic activity">
    <reaction>
        <text>a 1,2-diacyl-sn-glycero-3-phosphate + CTP + H(+) = a CDP-1,2-diacyl-sn-glycerol + diphosphate</text>
        <dbReference type="Rhea" id="RHEA:16229"/>
        <dbReference type="ChEBI" id="CHEBI:15378"/>
        <dbReference type="ChEBI" id="CHEBI:33019"/>
        <dbReference type="ChEBI" id="CHEBI:37563"/>
        <dbReference type="ChEBI" id="CHEBI:58332"/>
        <dbReference type="ChEBI" id="CHEBI:58608"/>
        <dbReference type="EC" id="2.7.7.41"/>
    </reaction>
</comment>
<comment type="pathway">
    <text>Phospholipid metabolism; CDP-diacylglycerol biosynthesis; CDP-diacylglycerol from sn-glycerol 3-phosphate: step 3/3.</text>
</comment>
<comment type="subcellular location">
    <subcellularLocation>
        <location>Cell inner membrane</location>
        <topology>Multi-pass membrane protein</topology>
    </subcellularLocation>
</comment>
<comment type="similarity">
    <text evidence="2">Belongs to the CDS family.</text>
</comment>
<comment type="sequence caution" evidence="2">
    <conflict type="erroneous initiation">
        <sequence resource="EMBL-CDS" id="AAA23545"/>
    </conflict>
</comment>
<comment type="sequence caution" evidence="2">
    <conflict type="erroneous initiation">
        <sequence resource="EMBL-CDS" id="AAB08604"/>
    </conflict>
</comment>
<reference key="1">
    <citation type="journal article" date="1985" name="J. Biol. Chem.">
        <title>Molecular cloning and sequencing of the gene for CDP-diglyceride synthetase of Escherichia coli.</title>
        <authorList>
            <person name="Icho T."/>
            <person name="Sparrow C.P."/>
            <person name="Raetz C.R.H."/>
        </authorList>
    </citation>
    <scope>NUCLEOTIDE SEQUENCE [GENOMIC DNA]</scope>
</reference>
<reference key="2">
    <citation type="submission" date="1996-02" db="EMBL/GenBank/DDBJ databases">
        <title>Systematic sequencing of the Escherichia coli genome: analysis of the 4.0 - 6.0 min (189,987 - 281,416bp) region.</title>
        <authorList>
            <person name="Takemoto K."/>
            <person name="Mori H."/>
            <person name="Murayama N."/>
            <person name="Kataoka K."/>
            <person name="Yano M."/>
            <person name="Itoh T."/>
            <person name="Yamamoto Y."/>
            <person name="Inokuchi H."/>
            <person name="Miki T."/>
            <person name="Hatada E."/>
            <person name="Fukuda R."/>
            <person name="Ichihara S."/>
            <person name="Mizuno T."/>
            <person name="Makino K."/>
            <person name="Nakata A."/>
            <person name="Yura T."/>
            <person name="Sampei G."/>
            <person name="Mizobuchi K."/>
        </authorList>
    </citation>
    <scope>NUCLEOTIDE SEQUENCE [LARGE SCALE GENOMIC DNA]</scope>
    <source>
        <strain>K12 / W3110 / ATCC 27325 / DSM 5911</strain>
    </source>
</reference>
<reference key="3">
    <citation type="submission" date="1997-01" db="EMBL/GenBank/DDBJ databases">
        <title>Sequence of minutes 4-25 of Escherichia coli.</title>
        <authorList>
            <person name="Chung E."/>
            <person name="Allen E."/>
            <person name="Araujo R."/>
            <person name="Aparicio A.M."/>
            <person name="Davis K."/>
            <person name="Duncan M."/>
            <person name="Federspiel N."/>
            <person name="Hyman R."/>
            <person name="Kalman S."/>
            <person name="Komp C."/>
            <person name="Kurdi O."/>
            <person name="Lew H."/>
            <person name="Lin D."/>
            <person name="Namath A."/>
            <person name="Oefner P."/>
            <person name="Roberts D."/>
            <person name="Schramm S."/>
            <person name="Davis R.W."/>
        </authorList>
    </citation>
    <scope>NUCLEOTIDE SEQUENCE [LARGE SCALE GENOMIC DNA]</scope>
    <source>
        <strain>K12 / MG1655 / ATCC 47076</strain>
    </source>
</reference>
<reference key="4">
    <citation type="journal article" date="1997" name="Science">
        <title>The complete genome sequence of Escherichia coli K-12.</title>
        <authorList>
            <person name="Blattner F.R."/>
            <person name="Plunkett G. III"/>
            <person name="Bloch C.A."/>
            <person name="Perna N.T."/>
            <person name="Burland V."/>
            <person name="Riley M."/>
            <person name="Collado-Vides J."/>
            <person name="Glasner J.D."/>
            <person name="Rode C.K."/>
            <person name="Mayhew G.F."/>
            <person name="Gregor J."/>
            <person name="Davis N.W."/>
            <person name="Kirkpatrick H.A."/>
            <person name="Goeden M.A."/>
            <person name="Rose D.J."/>
            <person name="Mau B."/>
            <person name="Shao Y."/>
        </authorList>
    </citation>
    <scope>NUCLEOTIDE SEQUENCE [LARGE SCALE GENOMIC DNA]</scope>
    <source>
        <strain>K12 / MG1655 / ATCC 47076</strain>
    </source>
</reference>
<reference key="5">
    <citation type="journal article" date="2006" name="Mol. Syst. Biol.">
        <title>Highly accurate genome sequences of Escherichia coli K-12 strains MG1655 and W3110.</title>
        <authorList>
            <person name="Hayashi K."/>
            <person name="Morooka N."/>
            <person name="Yamamoto Y."/>
            <person name="Fujita K."/>
            <person name="Isono K."/>
            <person name="Choi S."/>
            <person name="Ohtsubo E."/>
            <person name="Baba T."/>
            <person name="Wanner B.L."/>
            <person name="Mori H."/>
            <person name="Horiuchi T."/>
        </authorList>
    </citation>
    <scope>NUCLEOTIDE SEQUENCE [LARGE SCALE GENOMIC DNA]</scope>
    <source>
        <strain>K12 / W3110 / ATCC 27325 / DSM 5911</strain>
    </source>
</reference>
<reference key="6">
    <citation type="journal article" date="1985" name="J. Biol. Chem.">
        <title>Purification and properties of the membrane-bound CDP-diglyceride synthetase from Escherichia coli.</title>
        <authorList>
            <person name="Sparrow C.P."/>
            <person name="Raetz C.R.H."/>
        </authorList>
    </citation>
    <scope>CHARACTERIZATION</scope>
</reference>
<reference key="7">
    <citation type="journal article" date="2005" name="Science">
        <title>Global topology analysis of the Escherichia coli inner membrane proteome.</title>
        <authorList>
            <person name="Daley D.O."/>
            <person name="Rapp M."/>
            <person name="Granseth E."/>
            <person name="Melen K."/>
            <person name="Drew D."/>
            <person name="von Heijne G."/>
        </authorList>
    </citation>
    <scope>TOPOLOGY [LARGE SCALE ANALYSIS]</scope>
    <source>
        <strain>K12 / MG1655 / ATCC 47076</strain>
    </source>
</reference>
<dbReference type="EC" id="2.7.7.41"/>
<dbReference type="EMBL" id="M11330">
    <property type="protein sequence ID" value="AAA23545.1"/>
    <property type="status" value="ALT_INIT"/>
    <property type="molecule type" value="Genomic_DNA"/>
</dbReference>
<dbReference type="EMBL" id="U70214">
    <property type="protein sequence ID" value="AAB08604.1"/>
    <property type="status" value="ALT_INIT"/>
    <property type="molecule type" value="Genomic_DNA"/>
</dbReference>
<dbReference type="EMBL" id="U00096">
    <property type="protein sequence ID" value="AAC73286.2"/>
    <property type="molecule type" value="Genomic_DNA"/>
</dbReference>
<dbReference type="EMBL" id="AP009048">
    <property type="protein sequence ID" value="BAA77850.2"/>
    <property type="molecule type" value="Genomic_DNA"/>
</dbReference>
<dbReference type="PIR" id="A23898">
    <property type="entry name" value="SYECDG"/>
</dbReference>
<dbReference type="RefSeq" id="NP_414717.2">
    <property type="nucleotide sequence ID" value="NC_000913.3"/>
</dbReference>
<dbReference type="RefSeq" id="WP_000922446.1">
    <property type="nucleotide sequence ID" value="NZ_STEB01000032.1"/>
</dbReference>
<dbReference type="SMR" id="P0ABG1"/>
<dbReference type="BioGRID" id="4261198">
    <property type="interactions" value="7"/>
</dbReference>
<dbReference type="FunCoup" id="P0ABG1">
    <property type="interactions" value="592"/>
</dbReference>
<dbReference type="STRING" id="511145.b0175"/>
<dbReference type="PaxDb" id="511145-b0175"/>
<dbReference type="EnsemblBacteria" id="AAC73286">
    <property type="protein sequence ID" value="AAC73286"/>
    <property type="gene ID" value="b0175"/>
</dbReference>
<dbReference type="GeneID" id="93777250"/>
<dbReference type="GeneID" id="944876"/>
<dbReference type="KEGG" id="ecj:JW5810"/>
<dbReference type="KEGG" id="eco:b0175"/>
<dbReference type="KEGG" id="ecoc:C3026_00800"/>
<dbReference type="PATRIC" id="fig|511145.12.peg.182"/>
<dbReference type="EchoBASE" id="EB0137"/>
<dbReference type="eggNOG" id="COG0575">
    <property type="taxonomic scope" value="Bacteria"/>
</dbReference>
<dbReference type="HOGENOM" id="CLU_037294_1_2_6"/>
<dbReference type="InParanoid" id="P0ABG1"/>
<dbReference type="OMA" id="YVFILVW"/>
<dbReference type="OrthoDB" id="9799199at2"/>
<dbReference type="PhylomeDB" id="P0ABG1"/>
<dbReference type="BioCyc" id="EcoCyc:CDPDIGLYSYN-MONOMER"/>
<dbReference type="BioCyc" id="MetaCyc:CDPDIGLYSYN-MONOMER"/>
<dbReference type="BRENDA" id="2.7.7.41">
    <property type="organism ID" value="2026"/>
</dbReference>
<dbReference type="UniPathway" id="UPA00557">
    <property type="reaction ID" value="UER00614"/>
</dbReference>
<dbReference type="PRO" id="PR:P0ABG1"/>
<dbReference type="Proteomes" id="UP000000625">
    <property type="component" value="Chromosome"/>
</dbReference>
<dbReference type="GO" id="GO:0005886">
    <property type="term" value="C:plasma membrane"/>
    <property type="evidence" value="ECO:0000314"/>
    <property type="project" value="EcoCyc"/>
</dbReference>
<dbReference type="GO" id="GO:0004605">
    <property type="term" value="F:phosphatidate cytidylyltransferase activity"/>
    <property type="evidence" value="ECO:0000314"/>
    <property type="project" value="EcoCyc"/>
</dbReference>
<dbReference type="GO" id="GO:0016024">
    <property type="term" value="P:CDP-diacylglycerol biosynthetic process"/>
    <property type="evidence" value="ECO:0000314"/>
    <property type="project" value="EcoCyc"/>
</dbReference>
<dbReference type="InterPro" id="IPR000374">
    <property type="entry name" value="PC_trans"/>
</dbReference>
<dbReference type="NCBIfam" id="NF008635">
    <property type="entry name" value="PRK11624.1"/>
    <property type="match status" value="1"/>
</dbReference>
<dbReference type="PANTHER" id="PTHR46382">
    <property type="entry name" value="PHOSPHATIDATE CYTIDYLYLTRANSFERASE"/>
    <property type="match status" value="1"/>
</dbReference>
<dbReference type="PANTHER" id="PTHR46382:SF1">
    <property type="entry name" value="PHOSPHATIDATE CYTIDYLYLTRANSFERASE"/>
    <property type="match status" value="1"/>
</dbReference>
<dbReference type="Pfam" id="PF01148">
    <property type="entry name" value="CTP_transf_1"/>
    <property type="match status" value="1"/>
</dbReference>
<dbReference type="PROSITE" id="PS01315">
    <property type="entry name" value="CDS"/>
    <property type="match status" value="1"/>
</dbReference>
<gene>
    <name type="primary">cdsA</name>
    <name type="synonym">cds</name>
    <name type="ordered locus">b0175</name>
    <name type="ordered locus">JW5810</name>
</gene>
<feature type="chain" id="PRO_0000090734" description="Phosphatidate cytidylyltransferase">
    <location>
        <begin position="1"/>
        <end position="285"/>
    </location>
</feature>
<feature type="transmembrane region" description="Helical" evidence="1">
    <location>
        <begin position="31"/>
        <end position="51"/>
    </location>
</feature>
<feature type="transmembrane region" description="Helical" evidence="1">
    <location>
        <begin position="56"/>
        <end position="76"/>
    </location>
</feature>
<feature type="transmembrane region" description="Helical" evidence="1">
    <location>
        <begin position="93"/>
        <end position="113"/>
    </location>
</feature>
<feature type="transmembrane region" description="Helical" evidence="1">
    <location>
        <begin position="121"/>
        <end position="141"/>
    </location>
</feature>
<feature type="transmembrane region" description="Helical" evidence="1">
    <location>
        <begin position="151"/>
        <end position="171"/>
    </location>
</feature>
<feature type="transmembrane region" description="Helical" evidence="1">
    <location>
        <begin position="190"/>
        <end position="210"/>
    </location>
</feature>
<feature type="transmembrane region" description="Helical" evidence="1">
    <location>
        <begin position="213"/>
        <end position="233"/>
    </location>
</feature>
<feature type="transmembrane region" description="Helical" evidence="1">
    <location>
        <begin position="264"/>
        <end position="284"/>
    </location>
</feature>
<name>CDSA_ECOLI</name>
<organism>
    <name type="scientific">Escherichia coli (strain K12)</name>
    <dbReference type="NCBI Taxonomy" id="83333"/>
    <lineage>
        <taxon>Bacteria</taxon>
        <taxon>Pseudomonadati</taxon>
        <taxon>Pseudomonadota</taxon>
        <taxon>Gammaproteobacteria</taxon>
        <taxon>Enterobacterales</taxon>
        <taxon>Enterobacteriaceae</taxon>
        <taxon>Escherichia</taxon>
    </lineage>
</organism>
<sequence>MLKYRLISAFVLIPVVIAALFLLPPVGFAIVTLVVCMLAAWEWGQLSGFTTRSQRVWLAVLCGLLLALMLFLLPEYHRNIHQPLVEISLWASLGWWIVALLLVLFYPGSAAIWRNSKTLRLIFGVLTIVPFFWGMLALRAWHYDENHYSGAIWLLYVMILVWGADSGAYMFGKLFGKHKLAPKVSPGKTWQGFIGGLATAAVISWGYGMWANLDVAPVTLLICSIVAALASVLGDLTESMFKREAGIKDSGHLIPGHGGILDRIDSLTAAVPVFACLLLLVFRTL</sequence>
<protein>
    <recommendedName>
        <fullName>Phosphatidate cytidylyltransferase</fullName>
        <ecNumber>2.7.7.41</ecNumber>
    </recommendedName>
    <alternativeName>
        <fullName>CDP-DAG synthase</fullName>
    </alternativeName>
    <alternativeName>
        <fullName>CDP-DG synthase</fullName>
    </alternativeName>
    <alternativeName>
        <fullName>CDP-diacylglycerol synthase</fullName>
        <shortName>CDS</shortName>
    </alternativeName>
    <alternativeName>
        <fullName>CDP-diglyceride pyrophosphorylase</fullName>
    </alternativeName>
    <alternativeName>
        <fullName>CDP-diglyceride synthase</fullName>
    </alternativeName>
    <alternativeName>
        <fullName>CTP:phosphatidate cytidylyltransferase</fullName>
    </alternativeName>
</protein>
<keyword id="KW-0997">Cell inner membrane</keyword>
<keyword id="KW-1003">Cell membrane</keyword>
<keyword id="KW-0444">Lipid biosynthesis</keyword>
<keyword id="KW-0443">Lipid metabolism</keyword>
<keyword id="KW-0472">Membrane</keyword>
<keyword id="KW-0548">Nucleotidyltransferase</keyword>
<keyword id="KW-0594">Phospholipid biosynthesis</keyword>
<keyword id="KW-1208">Phospholipid metabolism</keyword>
<keyword id="KW-1185">Reference proteome</keyword>
<keyword id="KW-0808">Transferase</keyword>
<keyword id="KW-0812">Transmembrane</keyword>
<keyword id="KW-1133">Transmembrane helix</keyword>
<proteinExistence type="evidence at protein level"/>